<organism>
    <name type="scientific">Influenza A virus (strain A/Turkey/Minnesota/501/1978 H6N8)</name>
    <dbReference type="NCBI Taxonomy" id="387259"/>
    <lineage>
        <taxon>Viruses</taxon>
        <taxon>Riboviria</taxon>
        <taxon>Orthornavirae</taxon>
        <taxon>Negarnaviricota</taxon>
        <taxon>Polyploviricotina</taxon>
        <taxon>Insthoviricetes</taxon>
        <taxon>Articulavirales</taxon>
        <taxon>Orthomyxoviridae</taxon>
        <taxon>Alphainfluenzavirus</taxon>
        <taxon>Alphainfluenzavirus influenzae</taxon>
        <taxon>Influenza A virus</taxon>
    </lineage>
</organism>
<gene>
    <name evidence="2" type="primary">PA</name>
</gene>
<name>PA_I78AC</name>
<dbReference type="EC" id="3.1.-.-" evidence="2"/>
<dbReference type="EMBL" id="CY014776">
    <property type="protein sequence ID" value="ABI84680.1"/>
    <property type="molecule type" value="Genomic_RNA"/>
</dbReference>
<dbReference type="SMR" id="Q0A3Q2"/>
<dbReference type="MEROPS" id="S62.001"/>
<dbReference type="GO" id="GO:0030430">
    <property type="term" value="C:host cell cytoplasm"/>
    <property type="evidence" value="ECO:0007669"/>
    <property type="project" value="UniProtKB-SubCell"/>
</dbReference>
<dbReference type="GO" id="GO:0042025">
    <property type="term" value="C:host cell nucleus"/>
    <property type="evidence" value="ECO:0007669"/>
    <property type="project" value="UniProtKB-SubCell"/>
</dbReference>
<dbReference type="GO" id="GO:0004519">
    <property type="term" value="F:endonuclease activity"/>
    <property type="evidence" value="ECO:0007669"/>
    <property type="project" value="UniProtKB-KW"/>
</dbReference>
<dbReference type="GO" id="GO:0046872">
    <property type="term" value="F:metal ion binding"/>
    <property type="evidence" value="ECO:0007669"/>
    <property type="project" value="UniProtKB-KW"/>
</dbReference>
<dbReference type="GO" id="GO:0003723">
    <property type="term" value="F:RNA binding"/>
    <property type="evidence" value="ECO:0007669"/>
    <property type="project" value="UniProtKB-UniRule"/>
</dbReference>
<dbReference type="GO" id="GO:0075526">
    <property type="term" value="P:cap snatching"/>
    <property type="evidence" value="ECO:0007669"/>
    <property type="project" value="UniProtKB-UniRule"/>
</dbReference>
<dbReference type="GO" id="GO:0006351">
    <property type="term" value="P:DNA-templated transcription"/>
    <property type="evidence" value="ECO:0007669"/>
    <property type="project" value="UniProtKB-UniRule"/>
</dbReference>
<dbReference type="GO" id="GO:0039657">
    <property type="term" value="P:symbiont-mediated suppression of host gene expression"/>
    <property type="evidence" value="ECO:0007669"/>
    <property type="project" value="UniProtKB-KW"/>
</dbReference>
<dbReference type="GO" id="GO:0039523">
    <property type="term" value="P:symbiont-mediated suppression of host mRNA transcription via inhibition of RNA polymerase II activity"/>
    <property type="evidence" value="ECO:0007669"/>
    <property type="project" value="UniProtKB-UniRule"/>
</dbReference>
<dbReference type="GO" id="GO:0039694">
    <property type="term" value="P:viral RNA genome replication"/>
    <property type="evidence" value="ECO:0007669"/>
    <property type="project" value="InterPro"/>
</dbReference>
<dbReference type="GO" id="GO:0075523">
    <property type="term" value="P:viral translational frameshifting"/>
    <property type="evidence" value="ECO:0007669"/>
    <property type="project" value="UniProtKB-KW"/>
</dbReference>
<dbReference type="FunFam" id="3.40.91.90:FF:000001">
    <property type="entry name" value="Polymerase acidic protein"/>
    <property type="match status" value="1"/>
</dbReference>
<dbReference type="Gene3D" id="3.40.91.90">
    <property type="entry name" value="Influenza RNA-dependent RNA polymerase subunit PA, endonuclease domain"/>
    <property type="match status" value="1"/>
</dbReference>
<dbReference type="HAMAP" id="MF_04063">
    <property type="entry name" value="INFV_PA"/>
    <property type="match status" value="1"/>
</dbReference>
<dbReference type="InterPro" id="IPR037534">
    <property type="entry name" value="INFV_PA"/>
</dbReference>
<dbReference type="InterPro" id="IPR001009">
    <property type="entry name" value="PA/PA-X"/>
</dbReference>
<dbReference type="InterPro" id="IPR038372">
    <property type="entry name" value="PA/PA-X_sf"/>
</dbReference>
<dbReference type="Pfam" id="PF00603">
    <property type="entry name" value="Flu_PA"/>
    <property type="match status" value="1"/>
</dbReference>
<accession>Q0A3Q2</accession>
<proteinExistence type="inferred from homology"/>
<comment type="function">
    <text evidence="2">Plays an essential role in viral RNA transcription and replication by forming the heterotrimeric polymerase complex together with PB1 and PB2 subunits. The complex transcribes viral mRNAs by using a unique mechanism called cap-snatching. It consists in the hijacking and cleavage of host capped pre-mRNAs. These short capped RNAs are then used as primers for viral mRNAs. The PB2 subunit is responsible for the binding of the 5' cap of cellular pre-mRNAs which are subsequently cleaved after 10-13 nucleotides by the PA subunit that carries the endonuclease activity.</text>
</comment>
<comment type="cofactor">
    <cofactor evidence="2">
        <name>Mn(2+)</name>
        <dbReference type="ChEBI" id="CHEBI:29035"/>
    </cofactor>
    <text evidence="2">Binds 2 manganese ions per subunit.</text>
</comment>
<comment type="subunit">
    <text evidence="1 2">Influenza RNA polymerase is composed of three subunits: PB1, PB2 and PA. Interacts (via C-terminus) with PB1 (via N-terminus).</text>
</comment>
<comment type="subcellular location">
    <subcellularLocation>
        <location evidence="2">Host cytoplasm</location>
    </subcellularLocation>
    <subcellularLocation>
        <location evidence="2">Host nucleus</location>
    </subcellularLocation>
    <text evidence="1 2">PB1 and PA are transported in the host nucleus as a complex.</text>
</comment>
<comment type="alternative products">
    <event type="ribosomal frameshifting"/>
    <isoform>
        <id>Q0A3Q2-1</id>
        <name>PA</name>
        <sequence type="displayed"/>
    </isoform>
    <isoform>
        <id>P0DJV6-1</id>
        <name>PA-X</name>
        <sequence type="external"/>
    </isoform>
</comment>
<comment type="PTM">
    <text evidence="1 2">Phosphorylated on serines and threonines by host kinases, including human casein kinase II.</text>
</comment>
<comment type="similarity">
    <text evidence="2">Belongs to the influenza viruses PA family.</text>
</comment>
<evidence type="ECO:0000250" key="1">
    <source>
        <dbReference type="UniProtKB" id="P03433"/>
    </source>
</evidence>
<evidence type="ECO:0000255" key="2">
    <source>
        <dbReference type="HAMAP-Rule" id="MF_04063"/>
    </source>
</evidence>
<organismHost>
    <name type="scientific">Aves</name>
    <dbReference type="NCBI Taxonomy" id="8782"/>
</organismHost>
<sequence length="716" mass="82581">MEDFVRQCFNPMIVELAEKAMKEYGEDPKIETNKFAAICTHLEVCFMYSDFHFIDERGESIIVESGDPNALLKHRFEIIEGRDRTMAWTVINSICNTTGVEKPKFLPDLYDYKENRFIEIGVTRREVHIYYLEKANKIKSEKTHIHIFSFTGEEMATKADYTLDDESRARIKTRLFTIRQEMASRGLWDSFRQSERGEETIEERFEITGTMRRLADQSLPPNFSSLENFRAYVDGFEPNGCIEGKLSQMSKEVNARIEPFLKTTPRPLRLPEGPPCSQRSKFLLMDALKLSIEDPSHEGEGIPLYDAIKCMKTFFGWKEPNIVKPHEKGINPNYLLAWKQVLAELQDIENEEKIPKTKNMKKTSQLKWALGENMAPEKVDFEDCKDVSDLKQYDSDEPEQRSLASWIQSEFNKACELTDSSWIELDEIGEDIAPIEHIASMRRNYFTAEVSHCRATEYIMKGVYINTALLNASCAAMDDFQLIPMISKCRTKEGRRKTNLYGFIIKGRSHLRNDTDVVNFVSMEFSLTDPRLEPHKWEKYCVLEIGDMLLRTAIGQVSRPMFLYVRTNGTSKIKMKWGMEMRRCLLQSLQQIESMIEAESSVKEKDMTKEFFENKSETWPIGESPKGVEEGSIGKVCRTLLAKSVFNSLYASPQLEGFSAESRKLLLIVQALRDNLEPGTFDLGGLYEAIEECLINDPWVLLNASWFNSFLTHALK</sequence>
<feature type="chain" id="PRO_0000279263" description="Polymerase acidic protein">
    <location>
        <begin position="1"/>
        <end position="716"/>
    </location>
</feature>
<feature type="short sequence motif" description="Nuclear localization signal 1 (NLS1)" evidence="1 2">
    <location>
        <begin position="124"/>
        <end position="139"/>
    </location>
</feature>
<feature type="short sequence motif" description="Nuclear localization signal 2 (NLS2)" evidence="1 2">
    <location>
        <begin position="184"/>
        <end position="247"/>
    </location>
</feature>
<feature type="binding site" evidence="2">
    <location>
        <position position="41"/>
    </location>
    <ligand>
        <name>Mn(2+)</name>
        <dbReference type="ChEBI" id="CHEBI:29035"/>
        <label>1</label>
    </ligand>
</feature>
<feature type="binding site" evidence="2">
    <location>
        <position position="80"/>
    </location>
    <ligand>
        <name>Mn(2+)</name>
        <dbReference type="ChEBI" id="CHEBI:29035"/>
        <label>2</label>
    </ligand>
</feature>
<feature type="binding site" evidence="2">
    <location>
        <position position="108"/>
    </location>
    <ligand>
        <name>Mn(2+)</name>
        <dbReference type="ChEBI" id="CHEBI:29035"/>
        <label>1</label>
    </ligand>
</feature>
<feature type="binding site" evidence="2">
    <location>
        <position position="108"/>
    </location>
    <ligand>
        <name>Mn(2+)</name>
        <dbReference type="ChEBI" id="CHEBI:29035"/>
        <label>2</label>
    </ligand>
</feature>
<feature type="binding site" evidence="2">
    <location>
        <position position="119"/>
    </location>
    <ligand>
        <name>Mn(2+)</name>
        <dbReference type="ChEBI" id="CHEBI:29035"/>
        <label>1</label>
    </ligand>
</feature>
<feature type="binding site" evidence="2">
    <location>
        <position position="120"/>
    </location>
    <ligand>
        <name>Mn(2+)</name>
        <dbReference type="ChEBI" id="CHEBI:29035"/>
        <label>1</label>
    </ligand>
</feature>
<reference key="1">
    <citation type="journal article" date="2006" name="Science">
        <title>Large-scale sequence analysis of avian influenza isolates.</title>
        <authorList>
            <person name="Obenauer J.C."/>
            <person name="Denson J."/>
            <person name="Mehta P.K."/>
            <person name="Su X."/>
            <person name="Mukatira S."/>
            <person name="Finkelstein D.B."/>
            <person name="Xu X."/>
            <person name="Wang J."/>
            <person name="Ma J."/>
            <person name="Fan Y."/>
            <person name="Rakestraw K.M."/>
            <person name="Webster R.G."/>
            <person name="Hoffmann E."/>
            <person name="Krauss S."/>
            <person name="Zheng J."/>
            <person name="Zhang Z."/>
            <person name="Naeve C.W."/>
        </authorList>
    </citation>
    <scope>NUCLEOTIDE SEQUENCE [GENOMIC RNA]</scope>
</reference>
<keyword id="KW-1157">Cap snatching</keyword>
<keyword id="KW-0255">Endonuclease</keyword>
<keyword id="KW-1262">Eukaryotic host gene expression shutoff by virus</keyword>
<keyword id="KW-1191">Eukaryotic host transcription shutoff by virus</keyword>
<keyword id="KW-1035">Host cytoplasm</keyword>
<keyword id="KW-1190">Host gene expression shutoff by virus</keyword>
<keyword id="KW-1048">Host nucleus</keyword>
<keyword id="KW-0945">Host-virus interaction</keyword>
<keyword id="KW-0378">Hydrolase</keyword>
<keyword id="KW-1104">Inhibition of host RNA polymerase II by virus</keyword>
<keyword id="KW-0464">Manganese</keyword>
<keyword id="KW-0479">Metal-binding</keyword>
<keyword id="KW-0540">Nuclease</keyword>
<keyword id="KW-0597">Phosphoprotein</keyword>
<keyword id="KW-0688">Ribosomal frameshifting</keyword>
<protein>
    <recommendedName>
        <fullName evidence="2">Polymerase acidic protein</fullName>
        <ecNumber evidence="2">3.1.-.-</ecNumber>
    </recommendedName>
    <alternativeName>
        <fullName evidence="2">RNA-directed RNA polymerase subunit P2</fullName>
    </alternativeName>
</protein>